<name>QCR7_DERFA</name>
<comment type="function">
    <text evidence="2">Component of the ubiquinol-cytochrome c oxidoreductase, a multisubunit transmembrane complex that is part of the mitochondrial electron transport chain which drives oxidative phosphorylation. The respiratory chain contains 3 multisubunit complexes succinate dehydrogenase (complex II, CII), ubiquinol-cytochrome c oxidoreductase (cytochrome b-c1 complex, complex III, CIII) and cytochrome c oxidase (complex IV, CIV), that cooperate to transfer electrons derived from NADH and succinate to molecular oxygen, creating an electrochemical gradient over the inner membrane that drives transmembrane transport and the ATP synthase. The cytochrome b-c1 complex catalyzes electron transfer from ubiquinol to cytochrome c, linking this redox reaction to translocation of protons across the mitochondrial inner membrane, with protons being carried across the membrane as hydrogens on the quinol. In the process called Q cycle, 2 protons are consumed from the matrix, 4 protons are released into the intermembrane space and 2 electrons are passed to cytochrome c.</text>
</comment>
<comment type="subunit">
    <text evidence="1">Component of the ubiquinol-cytochrome c oxidoreductase (cytochrome b-c1 complex, complex III, CIII), a multisubunit enzyme composed of 3 respiratory subunits cytochrome b, cytochrome c1 and Rieske protein, 2 core protein subunits, and additional low-molecular weight protein subunits. The complex exists as an obligatory dimer and forms supercomplexes (SCs) in the inner mitochondrial membrane with cytochrome c oxidase (complex IV, CIV).</text>
</comment>
<comment type="subcellular location">
    <subcellularLocation>
        <location>Mitochondrion inner membrane</location>
        <topology>Peripheral membrane protein</topology>
        <orientation evidence="1">Matrix side</orientation>
    </subcellularLocation>
</comment>
<comment type="allergen">
    <text evidence="4 5">Causes an allergic reaction in human (PubMed:25445830, PubMed:31545417). Recombinant protein binds to IgE in 100% of the 40 patients tested allergic to house dust mite (HDM). 50% of the 10 HDM-allergic patients tested have positive skin prick test (SPT) reactions to the recombinant protein (PubMed:25445830). Recombinant protein binds to IgE in 100% of the 15 HDM-allergic patients tested (PubMed:31545417).</text>
</comment>
<comment type="similarity">
    <text evidence="3">Belongs to the UQCRB/QCR7 family.</text>
</comment>
<organism evidence="9">
    <name type="scientific">Dermatophagoides farinae</name>
    <name type="common">American house dust mite</name>
    <dbReference type="NCBI Taxonomy" id="6954"/>
    <lineage>
        <taxon>Eukaryota</taxon>
        <taxon>Metazoa</taxon>
        <taxon>Ecdysozoa</taxon>
        <taxon>Arthropoda</taxon>
        <taxon>Chelicerata</taxon>
        <taxon>Arachnida</taxon>
        <taxon>Acari</taxon>
        <taxon>Acariformes</taxon>
        <taxon>Sarcoptiformes</taxon>
        <taxon>Astigmata</taxon>
        <taxon>Psoroptidia</taxon>
        <taxon>Analgoidea</taxon>
        <taxon>Pyroglyphidae</taxon>
        <taxon>Dermatophagoidinae</taxon>
        <taxon>Dermatophagoides</taxon>
    </lineage>
</organism>
<dbReference type="EMBL" id="KC669700">
    <property type="protein sequence ID" value="AGI78542.1"/>
    <property type="molecule type" value="Genomic_DNA"/>
</dbReference>
<dbReference type="EMBL" id="KP064571">
    <property type="protein sequence ID" value="AJK91617.1"/>
    <property type="molecule type" value="mRNA"/>
</dbReference>
<dbReference type="RefSeq" id="XP_046918269.1">
    <property type="nucleotide sequence ID" value="XM_047062313.1"/>
</dbReference>
<dbReference type="SMR" id="M9RZ95"/>
<dbReference type="Allergome" id="10861">
    <property type="allergen name" value="Der f 24"/>
</dbReference>
<dbReference type="Allergome" id="10862">
    <property type="allergen name" value="Der f 24.0101"/>
</dbReference>
<dbReference type="GeneID" id="124498546"/>
<dbReference type="OrthoDB" id="425749at2759"/>
<dbReference type="GO" id="GO:0099617">
    <property type="term" value="C:matrix side of mitochondrial inner membrane"/>
    <property type="evidence" value="ECO:0000250"/>
    <property type="project" value="UniProtKB"/>
</dbReference>
<dbReference type="GO" id="GO:0045275">
    <property type="term" value="C:respiratory chain complex III"/>
    <property type="evidence" value="ECO:0000250"/>
    <property type="project" value="UniProtKB"/>
</dbReference>
<dbReference type="GO" id="GO:0006122">
    <property type="term" value="P:mitochondrial electron transport, ubiquinol to cytochrome c"/>
    <property type="evidence" value="ECO:0000250"/>
    <property type="project" value="UniProtKB"/>
</dbReference>
<dbReference type="Gene3D" id="1.10.1090.10">
    <property type="entry name" value="Cytochrome b-c1 complex subunit 7"/>
    <property type="match status" value="1"/>
</dbReference>
<dbReference type="InterPro" id="IPR003197">
    <property type="entry name" value="QCR7"/>
</dbReference>
<dbReference type="InterPro" id="IPR036544">
    <property type="entry name" value="QCR7_sf"/>
</dbReference>
<dbReference type="PANTHER" id="PTHR12022:SF0">
    <property type="entry name" value="CYTOCHROME B-C1 COMPLEX SUBUNIT 7"/>
    <property type="match status" value="1"/>
</dbReference>
<dbReference type="PANTHER" id="PTHR12022">
    <property type="entry name" value="UBIQUINOL-CYTOCHROME C REDUCTASE COMPLEX 14 KD PROTEIN"/>
    <property type="match status" value="1"/>
</dbReference>
<dbReference type="Pfam" id="PF02271">
    <property type="entry name" value="UCR_14kD"/>
    <property type="match status" value="1"/>
</dbReference>
<dbReference type="PIRSF" id="PIRSF000022">
    <property type="entry name" value="Bc1_14K"/>
    <property type="match status" value="1"/>
</dbReference>
<dbReference type="SUPFAM" id="SSF81524">
    <property type="entry name" value="14 kDa protein of cytochrome bc1 complex (Ubiquinol-cytochrome c reductase)"/>
    <property type="match status" value="1"/>
</dbReference>
<feature type="chain" id="PRO_0000451109" description="Cytochrome b-c1 complex subunit 7">
    <location>
        <begin position="1"/>
        <end position="118"/>
    </location>
</feature>
<feature type="region of interest" description="IgE-binding. Immunodominant epitope; induces specific IgE antibody production in mice. Causes degranulation of rat basophilic leukemia (RBL) cells and the release of beta-hexosaminidase from them" evidence="5">
    <location>
        <begin position="1"/>
        <end position="32"/>
    </location>
</feature>
<proteinExistence type="evidence at protein level"/>
<reference evidence="9" key="1">
    <citation type="journal article" date="2015" name="J. Allergy Clin. Immunol.">
        <title>The draft genome, transcriptome, and microbiome of Dermatophagoides farinae reveal a broad spectrum of dust mite allergens.</title>
        <authorList>
            <person name="Chan T.F."/>
            <person name="Ji K.M."/>
            <person name="Yim A.K."/>
            <person name="Liu X.Y."/>
            <person name="Zhou J.W."/>
            <person name="Li R.Q."/>
            <person name="Yang K.Y."/>
            <person name="Li J."/>
            <person name="Li M."/>
            <person name="Law P.T."/>
            <person name="Wu Y.L."/>
            <person name="Cai Z.L."/>
            <person name="Qin H."/>
            <person name="Bao Y."/>
            <person name="Leung R.K."/>
            <person name="Ng P.K."/>
            <person name="Zou J."/>
            <person name="Zhong X.J."/>
            <person name="Ran P.X."/>
            <person name="Zhong N.S."/>
            <person name="Liu Z.G."/>
            <person name="Tsui S.K."/>
        </authorList>
    </citation>
    <scope>NUCLEOTIDE SEQUENCE [GENOMIC DNA]</scope>
    <scope>PROTEIN SEQUENCE OF 29-49 AND 51-62</scope>
    <scope>IDENTIFICATION BY MASS SPECTROMETRY</scope>
    <scope>ALLERGEN</scope>
</reference>
<reference key="2">
    <citation type="journal article" date="2019" name="Int. J. Mol. Med.">
        <title>Identification of immunodominant IgE epitopes of the major house dust mite allergen Der f 24.</title>
        <authorList>
            <person name="Cai Z.L."/>
            <person name="Zhang Z."/>
            <person name="Luo W.L."/>
            <person name="Hou Y.B."/>
            <person name="He Y.S."/>
            <person name="Chen J.J."/>
            <person name="Ji K."/>
        </authorList>
    </citation>
    <scope>NUCLEOTIDE SEQUENCE [MRNA]</scope>
    <scope>ALLERGEN</scope>
    <scope>REGION</scope>
    <scope>3D-STRUCTURE MODELING</scope>
</reference>
<sequence>MVHLTKTLRFINNPGFRKFYYGLQGYNKYGLYYDDFYDYTDAAHLEAVRRLPPDLYDQHTYRLVRASQLEITKQFLPKEQWPSYEEDMDKGRFLTPYLDEVMKEKKEKEEWINFLSKD</sequence>
<accession>M9RZ95</accession>
<evidence type="ECO:0000250" key="1">
    <source>
        <dbReference type="UniProtKB" id="P00128"/>
    </source>
</evidence>
<evidence type="ECO:0000250" key="2">
    <source>
        <dbReference type="UniProtKB" id="Q871K1"/>
    </source>
</evidence>
<evidence type="ECO:0000255" key="3">
    <source>
        <dbReference type="PIRNR" id="PIRNR000022"/>
    </source>
</evidence>
<evidence type="ECO:0000269" key="4">
    <source>
    </source>
</evidence>
<evidence type="ECO:0000269" key="5">
    <source>
    </source>
</evidence>
<evidence type="ECO:0000303" key="6">
    <source>
    </source>
</evidence>
<evidence type="ECO:0000303" key="7">
    <source>
    </source>
</evidence>
<evidence type="ECO:0000305" key="8"/>
<evidence type="ECO:0000312" key="9">
    <source>
        <dbReference type="EMBL" id="AGI78542.1"/>
    </source>
</evidence>
<protein>
    <recommendedName>
        <fullName evidence="8">Cytochrome b-c1 complex subunit 7</fullName>
    </recommendedName>
    <alternativeName>
        <fullName evidence="6 7">Allergen Der f 24</fullName>
    </alternativeName>
    <alternativeName>
        <fullName evidence="8">Complex III subunit 7</fullName>
    </alternativeName>
    <alternativeName>
        <fullName evidence="8">Complex III subunit VII</fullName>
    </alternativeName>
    <alternativeName>
        <fullName evidence="6 7">Ubiquinol-cytochrome c reductase binding protein Der f 24</fullName>
        <shortName evidence="6 7">UQCRB Der f 24</shortName>
    </alternativeName>
    <alternativeName>
        <fullName evidence="8">Ubiquinol-cytochrome c reductase complex 14 kDa protein</fullName>
    </alternativeName>
    <allergenName evidence="8">Der f 24.0101</allergenName>
</protein>
<keyword id="KW-0020">Allergen</keyword>
<keyword id="KW-0903">Direct protein sequencing</keyword>
<keyword id="KW-0249">Electron transport</keyword>
<keyword id="KW-0472">Membrane</keyword>
<keyword id="KW-0496">Mitochondrion</keyword>
<keyword id="KW-0999">Mitochondrion inner membrane</keyword>
<keyword id="KW-0679">Respiratory chain</keyword>
<keyword id="KW-0813">Transport</keyword>